<organism>
    <name type="scientific">Mus musculus</name>
    <name type="common">Mouse</name>
    <dbReference type="NCBI Taxonomy" id="10090"/>
    <lineage>
        <taxon>Eukaryota</taxon>
        <taxon>Metazoa</taxon>
        <taxon>Chordata</taxon>
        <taxon>Craniata</taxon>
        <taxon>Vertebrata</taxon>
        <taxon>Euteleostomi</taxon>
        <taxon>Mammalia</taxon>
        <taxon>Eutheria</taxon>
        <taxon>Euarchontoglires</taxon>
        <taxon>Glires</taxon>
        <taxon>Rodentia</taxon>
        <taxon>Myomorpha</taxon>
        <taxon>Muroidea</taxon>
        <taxon>Muridae</taxon>
        <taxon>Murinae</taxon>
        <taxon>Mus</taxon>
        <taxon>Mus</taxon>
    </lineage>
</organism>
<protein>
    <recommendedName>
        <fullName evidence="8">Olfactory receptor 4M1</fullName>
    </recommendedName>
    <alternativeName>
        <fullName evidence="7">Olfactory receptor 734</fullName>
    </alternativeName>
</protein>
<reference key="1">
    <citation type="journal article" date="2002" name="Hum. Mol. Genet.">
        <title>Different evolutionary processes shaped the mouse and human olfactory receptor gene families.</title>
        <authorList>
            <person name="Young J.M."/>
            <person name="Friedman C."/>
            <person name="Williams E.M."/>
            <person name="Ross J.A."/>
            <person name="Tonnes-Priddy L."/>
            <person name="Trask B.J."/>
        </authorList>
    </citation>
    <scope>NUCLEOTIDE SEQUENCE [GENOMIC DNA]</scope>
</reference>
<reference key="2">
    <citation type="journal article" date="2002" name="Hum. Mol. Genet.">
        <authorList>
            <person name="Young J.M."/>
            <person name="Friedman C."/>
            <person name="Williams E.M."/>
            <person name="Ross J.A."/>
            <person name="Tonnes-Priddy L."/>
            <person name="Trask B.J."/>
        </authorList>
    </citation>
    <scope>ERRATUM OF PUBMED:11875048</scope>
</reference>
<reference key="3">
    <citation type="journal article" date="2002" name="Nat. Neurosci.">
        <title>The olfactory receptor gene superfamily of the mouse.</title>
        <authorList>
            <person name="Zhang X."/>
            <person name="Firestein S."/>
        </authorList>
    </citation>
    <scope>NUCLEOTIDE SEQUENCE [GENOMIC DNA]</scope>
</reference>
<reference key="4">
    <citation type="journal article" date="2003" name="Genome Biol.">
        <title>Odorant receptor expressed sequence tags demonstrate olfactory expression of over 400 genes, extensive alternate splicing and unequal expression levels.</title>
        <authorList>
            <person name="Young J.M."/>
            <person name="Shykind B.M."/>
            <person name="Lane R.P."/>
            <person name="Tonnes-Priddy L."/>
            <person name="Ross J.A."/>
            <person name="Walker M."/>
            <person name="Williams E.M."/>
            <person name="Trask B.J."/>
        </authorList>
    </citation>
    <scope>NUCLEOTIDE SEQUENCE [GENOMIC DNA]</scope>
</reference>
<reference key="5">
    <citation type="journal article" date="2009" name="PLoS Biol.">
        <title>Lineage-specific biology revealed by a finished genome assembly of the mouse.</title>
        <authorList>
            <person name="Church D.M."/>
            <person name="Goodstadt L."/>
            <person name="Hillier L.W."/>
            <person name="Zody M.C."/>
            <person name="Goldstein S."/>
            <person name="She X."/>
            <person name="Bult C.J."/>
            <person name="Agarwala R."/>
            <person name="Cherry J.L."/>
            <person name="DiCuccio M."/>
            <person name="Hlavina W."/>
            <person name="Kapustin Y."/>
            <person name="Meric P."/>
            <person name="Maglott D."/>
            <person name="Birtle Z."/>
            <person name="Marques A.C."/>
            <person name="Graves T."/>
            <person name="Zhou S."/>
            <person name="Teague B."/>
            <person name="Potamousis K."/>
            <person name="Churas C."/>
            <person name="Place M."/>
            <person name="Herschleb J."/>
            <person name="Runnheim R."/>
            <person name="Forrest D."/>
            <person name="Amos-Landgraf J."/>
            <person name="Schwartz D.C."/>
            <person name="Cheng Z."/>
            <person name="Lindblad-Toh K."/>
            <person name="Eichler E.E."/>
            <person name="Ponting C.P."/>
        </authorList>
    </citation>
    <scope>NUCLEOTIDE SEQUENCE [LARGE SCALE GENOMIC DNA]</scope>
    <source>
        <strain>C57BL/6J</strain>
    </source>
</reference>
<reference key="6">
    <citation type="journal article" date="2004" name="Genome Res.">
        <title>The status, quality, and expansion of the NIH full-length cDNA project: the Mammalian Gene Collection (MGC).</title>
        <authorList>
            <consortium name="The MGC Project Team"/>
        </authorList>
    </citation>
    <scope>NUCLEOTIDE SEQUENCE [LARGE SCALE MRNA]</scope>
    <source>
        <tissue evidence="9">Brain</tissue>
    </source>
</reference>
<reference key="7">
    <citation type="journal article" date="2019" name="Cell Discov.">
        <title>The Asprosin-OLFR734 hormonal signaling axis modulates male fertility.</title>
        <authorList>
            <person name="Wei F."/>
            <person name="Long A."/>
            <person name="Wang Y."/>
        </authorList>
    </citation>
    <scope>FUNCTION</scope>
    <scope>TISSUE SPECIFICITY</scope>
    <scope>DISRUPTION PHENOTYPE</scope>
</reference>
<reference key="8">
    <citation type="journal article" date="2019" name="Cell Metab.">
        <title>OLFR734 mediates glucose metabolism as a receptor of asprosin.</title>
        <authorList>
            <person name="Li E."/>
            <person name="Shan H."/>
            <person name="Chen L."/>
            <person name="Long A."/>
            <person name="Zhang Y."/>
            <person name="Liu Y."/>
            <person name="Jia L."/>
            <person name="Wei F."/>
            <person name="Han J."/>
            <person name="Li T."/>
            <person name="Liu X."/>
            <person name="Deng H."/>
            <person name="Wang Y."/>
        </authorList>
    </citation>
    <scope>FUNCTION</scope>
    <scope>SUBCELLULAR LOCATION</scope>
    <scope>TISSUE SPECIFICITY</scope>
    <scope>DISRUPTION PHENOTYPE</scope>
    <scope>MUTAGENESIS OF GLU-173 AND ARG-186</scope>
</reference>
<reference key="9">
    <citation type="journal article" date="2020" name="Cell Discov.">
        <title>The Asprosin-OLFR734 module regulates appetitive behaviors.</title>
        <authorList>
            <person name="Liu Y."/>
            <person name="Long A."/>
            <person name="Chen L."/>
            <person name="Jia L."/>
            <person name="Wang Y."/>
        </authorList>
    </citation>
    <scope>FUNCTION</scope>
    <scope>DISRUPTION PHENOTYPE</scope>
</reference>
<dbReference type="EMBL" id="AY073432">
    <property type="protein sequence ID" value="AAL61095.1"/>
    <property type="molecule type" value="Genomic_DNA"/>
</dbReference>
<dbReference type="EMBL" id="AY317859">
    <property type="protein sequence ID" value="AAP71197.1"/>
    <property type="molecule type" value="Genomic_DNA"/>
</dbReference>
<dbReference type="EMBL" id="BC141029">
    <property type="protein sequence ID" value="AAI41030.1"/>
    <property type="molecule type" value="mRNA"/>
</dbReference>
<dbReference type="CCDS" id="CCDS27010.1"/>
<dbReference type="RefSeq" id="NP_666875.1">
    <property type="nucleotide sequence ID" value="NM_146664.2"/>
</dbReference>
<dbReference type="SMR" id="Q8VFT4"/>
<dbReference type="FunCoup" id="Q8VFT4">
    <property type="interactions" value="1503"/>
</dbReference>
<dbReference type="STRING" id="10090.ENSMUSP00000150732"/>
<dbReference type="GlyCosmos" id="Q8VFT4">
    <property type="glycosylation" value="1 site, No reported glycans"/>
</dbReference>
<dbReference type="GlyGen" id="Q8VFT4">
    <property type="glycosylation" value="1 site"/>
</dbReference>
<dbReference type="PaxDb" id="10090-ENSMUSP00000057376"/>
<dbReference type="Ensembl" id="ENSMUST00000050928.3">
    <property type="protein sequence ID" value="ENSMUSP00000057376.3"/>
    <property type="gene ID" value="ENSMUSG00000045306.4"/>
</dbReference>
<dbReference type="Ensembl" id="ENSMUST00000217152.2">
    <property type="protein sequence ID" value="ENSMUSP00000150732.2"/>
    <property type="gene ID" value="ENSMUSG00000045306.4"/>
</dbReference>
<dbReference type="GeneID" id="258658"/>
<dbReference type="KEGG" id="mmu:258658"/>
<dbReference type="UCSC" id="uc007tkx.1">
    <property type="organism name" value="mouse"/>
</dbReference>
<dbReference type="AGR" id="MGI:3030568"/>
<dbReference type="CTD" id="441670"/>
<dbReference type="MGI" id="MGI:3030568">
    <property type="gene designation" value="Or4m1"/>
</dbReference>
<dbReference type="VEuPathDB" id="HostDB:ENSMUSG00000045306"/>
<dbReference type="eggNOG" id="ENOG502SKDS">
    <property type="taxonomic scope" value="Eukaryota"/>
</dbReference>
<dbReference type="GeneTree" id="ENSGT00940000163142"/>
<dbReference type="HOGENOM" id="CLU_012526_8_1_1"/>
<dbReference type="InParanoid" id="Q8VFT4"/>
<dbReference type="OMA" id="HITIVVF"/>
<dbReference type="OrthoDB" id="6130476at2759"/>
<dbReference type="PhylomeDB" id="Q8VFT4"/>
<dbReference type="TreeFam" id="TF338273"/>
<dbReference type="BioGRID-ORCS" id="258658">
    <property type="hits" value="1 hit in 70 CRISPR screens"/>
</dbReference>
<dbReference type="PRO" id="PR:Q8VFT4"/>
<dbReference type="Proteomes" id="UP000000589">
    <property type="component" value="Chromosome 14"/>
</dbReference>
<dbReference type="RNAct" id="Q8VFT4">
    <property type="molecule type" value="protein"/>
</dbReference>
<dbReference type="Bgee" id="ENSMUSG00000045306">
    <property type="expression patterns" value="Expressed in respiratory tract epithelium and 4 other cell types or tissues"/>
</dbReference>
<dbReference type="GO" id="GO:0016020">
    <property type="term" value="C:membrane"/>
    <property type="evidence" value="ECO:0000247"/>
    <property type="project" value="MGI"/>
</dbReference>
<dbReference type="GO" id="GO:0005886">
    <property type="term" value="C:plasma membrane"/>
    <property type="evidence" value="ECO:0000314"/>
    <property type="project" value="UniProtKB"/>
</dbReference>
<dbReference type="GO" id="GO:0004930">
    <property type="term" value="F:G protein-coupled receptor activity"/>
    <property type="evidence" value="ECO:0007669"/>
    <property type="project" value="UniProtKB-KW"/>
</dbReference>
<dbReference type="GO" id="GO:0004984">
    <property type="term" value="F:olfactory receptor activity"/>
    <property type="evidence" value="ECO:0000314"/>
    <property type="project" value="UniProtKB"/>
</dbReference>
<dbReference type="GO" id="GO:0007189">
    <property type="term" value="P:adenylate cyclase-activating G protein-coupled receptor signaling pathway"/>
    <property type="evidence" value="ECO:0000315"/>
    <property type="project" value="UniProtKB"/>
</dbReference>
<dbReference type="GO" id="GO:0007186">
    <property type="term" value="P:G protein-coupled receptor signaling pathway"/>
    <property type="evidence" value="ECO:0000247"/>
    <property type="project" value="MGI"/>
</dbReference>
<dbReference type="GO" id="GO:0042593">
    <property type="term" value="P:glucose homeostasis"/>
    <property type="evidence" value="ECO:0000314"/>
    <property type="project" value="UniProtKB"/>
</dbReference>
<dbReference type="GO" id="GO:0032100">
    <property type="term" value="P:positive regulation of appetite"/>
    <property type="evidence" value="ECO:0000315"/>
    <property type="project" value="UniProtKB"/>
</dbReference>
<dbReference type="GO" id="GO:1902093">
    <property type="term" value="P:positive regulation of flagellated sperm motility"/>
    <property type="evidence" value="ECO:0000315"/>
    <property type="project" value="UniProtKB"/>
</dbReference>
<dbReference type="GO" id="GO:0007608">
    <property type="term" value="P:sensory perception of smell"/>
    <property type="evidence" value="ECO:0000247"/>
    <property type="project" value="MGI"/>
</dbReference>
<dbReference type="CDD" id="cd15937">
    <property type="entry name" value="7tmA_OR4N-like"/>
    <property type="match status" value="1"/>
</dbReference>
<dbReference type="FunFam" id="1.20.1070.10:FF:000012">
    <property type="entry name" value="Olfactory receptor"/>
    <property type="match status" value="1"/>
</dbReference>
<dbReference type="Gene3D" id="1.20.1070.10">
    <property type="entry name" value="Rhodopsin 7-helix transmembrane proteins"/>
    <property type="match status" value="1"/>
</dbReference>
<dbReference type="InterPro" id="IPR000276">
    <property type="entry name" value="GPCR_Rhodpsn"/>
</dbReference>
<dbReference type="InterPro" id="IPR017452">
    <property type="entry name" value="GPCR_Rhodpsn_7TM"/>
</dbReference>
<dbReference type="InterPro" id="IPR000725">
    <property type="entry name" value="Olfact_rcpt"/>
</dbReference>
<dbReference type="InterPro" id="IPR050427">
    <property type="entry name" value="Olfactory_Receptors"/>
</dbReference>
<dbReference type="PANTHER" id="PTHR48002">
    <property type="entry name" value="OLFACTORY RECEPTOR"/>
    <property type="match status" value="1"/>
</dbReference>
<dbReference type="Pfam" id="PF13853">
    <property type="entry name" value="7tm_4"/>
    <property type="match status" value="1"/>
</dbReference>
<dbReference type="PRINTS" id="PR00237">
    <property type="entry name" value="GPCRRHODOPSN"/>
</dbReference>
<dbReference type="PRINTS" id="PR00245">
    <property type="entry name" value="OLFACTORYR"/>
</dbReference>
<dbReference type="SUPFAM" id="SSF81321">
    <property type="entry name" value="Family A G protein-coupled receptor-like"/>
    <property type="match status" value="1"/>
</dbReference>
<dbReference type="PROSITE" id="PS00237">
    <property type="entry name" value="G_PROTEIN_RECEP_F1_1"/>
    <property type="match status" value="1"/>
</dbReference>
<dbReference type="PROSITE" id="PS50262">
    <property type="entry name" value="G_PROTEIN_RECEP_F1_2"/>
    <property type="match status" value="1"/>
</dbReference>
<accession>Q8VFT4</accession>
<sequence length="313" mass="35601">MEPANDTTVTEFILTGLSQTREVQLVLFVIFLSFYLFILPVNILIICTIRLDSHLSSPMYFLLANLAFLDIWYSSITAPKMLVDFFVERKIISFGGCIAQLFFLHFVGASEMFLLTVMAFDRYAAICRPLHYATIMNRRLCCILVALSWTGGFVHSIIQVALIVRLPFCGPNELDNYFCDITQVVRIACANTFLEEMVMIFSSGLISVVCFIALLMSYAFLLTMLKKHSSSGESTSRAISTCYSHITIVVLMFGPSIYIYARPFDSFSLDKVVSVFHTVIFPLLNPIIYTLRNKEVKAAMRKLVNRYIFCKEK</sequence>
<proteinExistence type="evidence at protein level"/>
<evidence type="ECO:0000255" key="1"/>
<evidence type="ECO:0000255" key="2">
    <source>
        <dbReference type="PROSITE-ProRule" id="PRU00521"/>
    </source>
</evidence>
<evidence type="ECO:0000255" key="3">
    <source>
        <dbReference type="RuleBase" id="RU363047"/>
    </source>
</evidence>
<evidence type="ECO:0000269" key="4">
    <source>
    </source>
</evidence>
<evidence type="ECO:0000269" key="5">
    <source>
    </source>
</evidence>
<evidence type="ECO:0000269" key="6">
    <source>
    </source>
</evidence>
<evidence type="ECO:0000303" key="7">
    <source>
    </source>
</evidence>
<evidence type="ECO:0000305" key="8"/>
<evidence type="ECO:0000312" key="9">
    <source>
        <dbReference type="EMBL" id="AAI41030.1"/>
    </source>
</evidence>
<evidence type="ECO:0000312" key="10">
    <source>
        <dbReference type="MGI" id="MGI:3030568"/>
    </source>
</evidence>
<name>OR4M1_MOUSE</name>
<comment type="function">
    <text evidence="4 5 6">Olfactory receptor that acts as a receptor of Asprosin hormone at the surface of hepatocytes to promote hepatocyte glucose release (PubMed:31230984). Also binds Asprosin in the arcuate nucleus of the hypothalamus, thereby stimulating appetite by promoting orexigenic AgRP neuronal activity (PubMed:32337066). In testis, Asprosin-binding promotes sperm progressive motility and enhances male fertility (PubMed:31798959). The activity of this receptor is mediated by G proteins which activate adenylyl cyclase, resulting in an elevation of intracellular cAMP (PubMed:31230984).</text>
</comment>
<comment type="subcellular location">
    <subcellularLocation>
        <location evidence="4">Cell membrane</location>
        <topology evidence="3">Multi-pass membrane protein</topology>
    </subcellularLocation>
</comment>
<comment type="tissue specificity">
    <text evidence="4 5">Highly expressed in liver but not in adipose tissue (PubMed:31230984). Also expressed at high level in testis (PubMed:31798959).</text>
</comment>
<comment type="disruption phenotype">
    <text evidence="4 5 6">Compared to wild-type mice, mutant mice fed on a regular diet show a remarkable decrease in body weight, food intake, fat mass and plasma lipids (PubMed:31230984). Blunted response to Asprosin, including attenuated cAMP levels and hepatic glucose production, as well as improved insulin sensitivity (PubMed:31230984). Mutant mice show significantly reduced food intake in overnight-fasted mice compared with wild-type mice (PubMed:32337066). Male mice display decreased fertility caused by impaired sperm motility (PubMed:31798959).</text>
</comment>
<comment type="miscellaneous">
    <text evidence="8">The mouse olfactory receptor 4M1 (Q8VFT4) is not the one to one ortholog of human OR4M1 (Q8NGD0).</text>
</comment>
<comment type="similarity">
    <text evidence="8">Belongs to the G-protein coupled receptor 1 family.</text>
</comment>
<feature type="chain" id="PRO_0000453783" description="Olfactory receptor 4M1">
    <location>
        <begin position="1"/>
        <end position="313"/>
    </location>
</feature>
<feature type="topological domain" description="Extracellular" evidence="8">
    <location>
        <begin position="1"/>
        <end position="25"/>
    </location>
</feature>
<feature type="transmembrane region" description="Helical; Name=1" evidence="1">
    <location>
        <begin position="26"/>
        <end position="46"/>
    </location>
</feature>
<feature type="topological domain" description="Cytoplasmic" evidence="8">
    <location>
        <begin position="47"/>
        <end position="57"/>
    </location>
</feature>
<feature type="transmembrane region" description="Helical; Name=2" evidence="1">
    <location>
        <begin position="58"/>
        <end position="78"/>
    </location>
</feature>
<feature type="topological domain" description="Extracellular" evidence="8">
    <location>
        <begin position="79"/>
        <end position="97"/>
    </location>
</feature>
<feature type="transmembrane region" description="Helical; Name=3" evidence="1">
    <location>
        <begin position="98"/>
        <end position="118"/>
    </location>
</feature>
<feature type="topological domain" description="Cytoplasmic" evidence="8">
    <location>
        <begin position="119"/>
        <end position="142"/>
    </location>
</feature>
<feature type="transmembrane region" description="Helical; Name=4" evidence="1">
    <location>
        <begin position="143"/>
        <end position="163"/>
    </location>
</feature>
<feature type="topological domain" description="Extracellular" evidence="8">
    <location>
        <begin position="164"/>
        <end position="204"/>
    </location>
</feature>
<feature type="transmembrane region" description="Helical; Name=5" evidence="1">
    <location>
        <begin position="205"/>
        <end position="225"/>
    </location>
</feature>
<feature type="topological domain" description="Cytoplasmic" evidence="8">
    <location>
        <begin position="226"/>
        <end position="238"/>
    </location>
</feature>
<feature type="transmembrane region" description="Helical; Name=6" evidence="1">
    <location>
        <begin position="239"/>
        <end position="259"/>
    </location>
</feature>
<feature type="topological domain" description="Extracellular" evidence="8">
    <location>
        <begin position="260"/>
        <end position="270"/>
    </location>
</feature>
<feature type="transmembrane region" description="Helical; Name=7" evidence="1">
    <location>
        <begin position="271"/>
        <end position="291"/>
    </location>
</feature>
<feature type="topological domain" description="Cytoplasmic" evidence="8">
    <location>
        <begin position="292"/>
        <end position="313"/>
    </location>
</feature>
<feature type="glycosylation site" description="N-linked (GlcNAc...) asparagine" evidence="1">
    <location>
        <position position="5"/>
    </location>
</feature>
<feature type="disulfide bond" evidence="2">
    <location>
        <begin position="97"/>
        <end position="179"/>
    </location>
</feature>
<feature type="mutagenesis site" description="Reduced affinity for Asprosin." evidence="4">
    <original>E</original>
    <variation>A</variation>
    <location>
        <position position="173"/>
    </location>
</feature>
<feature type="mutagenesis site" description="Reduced affinity for Asprosin." evidence="4">
    <original>R</original>
    <variation>D</variation>
    <location>
        <position position="186"/>
    </location>
</feature>
<keyword id="KW-1003">Cell membrane</keyword>
<keyword id="KW-1015">Disulfide bond</keyword>
<keyword id="KW-0297">G-protein coupled receptor</keyword>
<keyword id="KW-0325">Glycoprotein</keyword>
<keyword id="KW-0472">Membrane</keyword>
<keyword id="KW-0552">Olfaction</keyword>
<keyword id="KW-0675">Receptor</keyword>
<keyword id="KW-1185">Reference proteome</keyword>
<keyword id="KW-0716">Sensory transduction</keyword>
<keyword id="KW-0807">Transducer</keyword>
<keyword id="KW-0812">Transmembrane</keyword>
<keyword id="KW-1133">Transmembrane helix</keyword>
<gene>
    <name evidence="10" type="primary">Or4m1</name>
    <name evidence="7 10" type="synonym">Olfr734</name>
</gene>